<reference key="1">
    <citation type="journal article" date="2005" name="Mol. Genet. Genomics">
        <title>A fine physical map of the rice chromosome 5.</title>
        <authorList>
            <person name="Cheng C.-H."/>
            <person name="Chung M.C."/>
            <person name="Liu S.-M."/>
            <person name="Chen S.-K."/>
            <person name="Kao F.Y."/>
            <person name="Lin S.-J."/>
            <person name="Hsiao S.-H."/>
            <person name="Tseng I.C."/>
            <person name="Hsing Y.-I.C."/>
            <person name="Wu H.-P."/>
            <person name="Chen C.-S."/>
            <person name="Shaw J.-F."/>
            <person name="Wu J."/>
            <person name="Matsumoto T."/>
            <person name="Sasaki T."/>
            <person name="Chen H.-C."/>
            <person name="Chow T.-Y."/>
        </authorList>
    </citation>
    <scope>NUCLEOTIDE SEQUENCE [LARGE SCALE GENOMIC DNA]</scope>
    <source>
        <strain>cv. Nipponbare</strain>
    </source>
</reference>
<reference key="2">
    <citation type="journal article" date="2005" name="Nature">
        <title>The map-based sequence of the rice genome.</title>
        <authorList>
            <consortium name="International rice genome sequencing project (IRGSP)"/>
        </authorList>
    </citation>
    <scope>NUCLEOTIDE SEQUENCE [LARGE SCALE GENOMIC DNA]</scope>
    <source>
        <strain>cv. Nipponbare</strain>
    </source>
</reference>
<reference key="3">
    <citation type="journal article" date="2013" name="Rice">
        <title>Improvement of the Oryza sativa Nipponbare reference genome using next generation sequence and optical map data.</title>
        <authorList>
            <person name="Kawahara Y."/>
            <person name="de la Bastide M."/>
            <person name="Hamilton J.P."/>
            <person name="Kanamori H."/>
            <person name="McCombie W.R."/>
            <person name="Ouyang S."/>
            <person name="Schwartz D.C."/>
            <person name="Tanaka T."/>
            <person name="Wu J."/>
            <person name="Zhou S."/>
            <person name="Childs K.L."/>
            <person name="Davidson R.M."/>
            <person name="Lin H."/>
            <person name="Quesada-Ocampo L."/>
            <person name="Vaillancourt B."/>
            <person name="Sakai H."/>
            <person name="Lee S.S."/>
            <person name="Kim J."/>
            <person name="Numa H."/>
            <person name="Itoh T."/>
            <person name="Buell C.R."/>
            <person name="Matsumoto T."/>
        </authorList>
    </citation>
    <scope>GENOME REANNOTATION</scope>
    <source>
        <strain>cv. Nipponbare</strain>
    </source>
</reference>
<reference key="4">
    <citation type="journal article" date="2006" name="Plant Physiol.">
        <title>Contribution of ethylene biosynthesis for resistance to blast fungus infection in young rice plants.</title>
        <authorList>
            <person name="Iwai T."/>
            <person name="Miyasaka A."/>
            <person name="Seo S."/>
            <person name="Ohashi Y."/>
        </authorList>
    </citation>
    <scope>TISSUE SPECIFICITY</scope>
    <scope>NOMENCLATURE</scope>
</reference>
<reference key="5">
    <citation type="journal article" date="2019" name="J. Exp. Bot.">
        <title>Editing of the OsACS locus alters phosphate deficiency-induced adaptive responses in rice seedlings.</title>
        <authorList>
            <person name="Lee H.Y."/>
            <person name="Chen Z."/>
            <person name="Zhang C."/>
            <person name="Yoon G.M."/>
        </authorList>
    </citation>
    <scope>TISSUE SPECIFICITY</scope>
</reference>
<feature type="chain" id="PRO_0000455671" description="1-aminocyclopropane-1-carboxylate synthase 4">
    <location>
        <begin position="1"/>
        <end position="496"/>
    </location>
</feature>
<feature type="modified residue" description="N6-(pyridoxal phosphate)lysine" evidence="1">
    <location>
        <position position="300"/>
    </location>
</feature>
<organism>
    <name type="scientific">Oryza sativa subsp. japonica</name>
    <name type="common">Rice</name>
    <dbReference type="NCBI Taxonomy" id="39947"/>
    <lineage>
        <taxon>Eukaryota</taxon>
        <taxon>Viridiplantae</taxon>
        <taxon>Streptophyta</taxon>
        <taxon>Embryophyta</taxon>
        <taxon>Tracheophyta</taxon>
        <taxon>Spermatophyta</taxon>
        <taxon>Magnoliopsida</taxon>
        <taxon>Liliopsida</taxon>
        <taxon>Poales</taxon>
        <taxon>Poaceae</taxon>
        <taxon>BOP clade</taxon>
        <taxon>Oryzoideae</taxon>
        <taxon>Oryzeae</taxon>
        <taxon>Oryzinae</taxon>
        <taxon>Oryza</taxon>
        <taxon>Oryza sativa</taxon>
    </lineage>
</organism>
<sequence>MGVKLLADGCAGASSSPALSRVATSAAHGEGSPYFAGWKAYDEDPYDAAANPDGVIQMGLAENQVSIDLLEGYLREHPEAAAWGVAGDGGGDSFRDNALFQDYHGLANFRKAMARFMEKIMGGKATFDPDRIVLTAGATAANELLTFILADPRDALLIPTPYYPGFDRDLRWRTGVNVVPVHCDSANGFQVTAAALQAAHDEAAAAGMRVRGVLITNPSNPLGTTARREALEGILGFVARNDIHLVSDEIYSGSVFAAPDLVSVAELVESSSSRARHRGEDDDGDVGVADRVHVVYSLSKDLGLPGFRVGVVYSRNDAVVAAARRMSSFTLVSSQTQRTLAAVLSDEAFVDAYVAANRARLRERHDHVVAGLARAGVPCLRGNAGLFVWMDMRRLLLGDGGDAATFAGELRLWDRLLREVKLNVSPGSSCHCSEPGWFRVCFANMSLATLDVALERISRFMDAWCKATIGKFNHLQPNRCEVNYFALERYQGHVQQ</sequence>
<protein>
    <recommendedName>
        <fullName evidence="4">1-aminocyclopropane-1-carboxylate synthase 4</fullName>
        <shortName evidence="4">ACC synthase 4</shortName>
        <shortName evidence="4">OsACS4</shortName>
        <ecNumber evidence="1">4.4.1.14</ecNumber>
    </recommendedName>
</protein>
<accession>Q5W6F9</accession>
<accession>A0A0P0WKX8</accession>
<proteinExistence type="evidence at transcript level"/>
<name>1A14_ORYSJ</name>
<dbReference type="EC" id="4.4.1.14" evidence="1"/>
<dbReference type="EMBL" id="AC136224">
    <property type="protein sequence ID" value="AAV44081.1"/>
    <property type="molecule type" value="Genomic_DNA"/>
</dbReference>
<dbReference type="EMBL" id="AC134344">
    <property type="protein sequence ID" value="AAV44121.1"/>
    <property type="molecule type" value="Genomic_DNA"/>
</dbReference>
<dbReference type="EMBL" id="AP014961">
    <property type="protein sequence ID" value="BAS93346.1"/>
    <property type="molecule type" value="Genomic_DNA"/>
</dbReference>
<dbReference type="SMR" id="Q5W6F9"/>
<dbReference type="FunCoup" id="Q5W6F9">
    <property type="interactions" value="300"/>
</dbReference>
<dbReference type="STRING" id="39947.Q5W6F9"/>
<dbReference type="PaxDb" id="39947-Q5W6F9"/>
<dbReference type="EnsemblPlants" id="Os05t0319200-00">
    <property type="protein sequence ID" value="Os05t0319200-00"/>
    <property type="gene ID" value="Os05g0319200"/>
</dbReference>
<dbReference type="Gramene" id="Os05t0319200-00">
    <property type="protein sequence ID" value="Os05t0319200-00"/>
    <property type="gene ID" value="Os05g0319200"/>
</dbReference>
<dbReference type="KEGG" id="osa:107275635"/>
<dbReference type="eggNOG" id="KOG0256">
    <property type="taxonomic scope" value="Eukaryota"/>
</dbReference>
<dbReference type="HOGENOM" id="CLU_017584_1_0_1"/>
<dbReference type="InParanoid" id="Q5W6F9"/>
<dbReference type="OMA" id="PYYGTFV"/>
<dbReference type="OrthoDB" id="691673at2759"/>
<dbReference type="PlantReactome" id="R-OSA-1119334">
    <property type="pathway name" value="Ethylene biosynthesis from methionine"/>
</dbReference>
<dbReference type="PlantReactome" id="R-OSA-1119624">
    <property type="pathway name" value="Methionine salvage pathway"/>
</dbReference>
<dbReference type="UniPathway" id="UPA00384">
    <property type="reaction ID" value="UER00562"/>
</dbReference>
<dbReference type="Proteomes" id="UP000000763">
    <property type="component" value="Chromosome 5"/>
</dbReference>
<dbReference type="Proteomes" id="UP000059680">
    <property type="component" value="Chromosome 5"/>
</dbReference>
<dbReference type="GO" id="GO:0016829">
    <property type="term" value="F:lyase activity"/>
    <property type="evidence" value="ECO:0007669"/>
    <property type="project" value="UniProtKB-KW"/>
</dbReference>
<dbReference type="GO" id="GO:0030170">
    <property type="term" value="F:pyridoxal phosphate binding"/>
    <property type="evidence" value="ECO:0007669"/>
    <property type="project" value="InterPro"/>
</dbReference>
<dbReference type="GO" id="GO:0008483">
    <property type="term" value="F:transaminase activity"/>
    <property type="evidence" value="ECO:0000318"/>
    <property type="project" value="GO_Central"/>
</dbReference>
<dbReference type="GO" id="GO:0006520">
    <property type="term" value="P:amino acid metabolic process"/>
    <property type="evidence" value="ECO:0000318"/>
    <property type="project" value="GO_Central"/>
</dbReference>
<dbReference type="GO" id="GO:0009693">
    <property type="term" value="P:ethylene biosynthetic process"/>
    <property type="evidence" value="ECO:0007669"/>
    <property type="project" value="UniProtKB-UniPathway"/>
</dbReference>
<dbReference type="CDD" id="cd00609">
    <property type="entry name" value="AAT_like"/>
    <property type="match status" value="1"/>
</dbReference>
<dbReference type="Gene3D" id="3.90.1150.10">
    <property type="entry name" value="Aspartate Aminotransferase, domain 1"/>
    <property type="match status" value="1"/>
</dbReference>
<dbReference type="Gene3D" id="3.40.640.10">
    <property type="entry name" value="Type I PLP-dependent aspartate aminotransferase-like (Major domain)"/>
    <property type="match status" value="1"/>
</dbReference>
<dbReference type="InterPro" id="IPR004839">
    <property type="entry name" value="Aminotransferase_I/II_large"/>
</dbReference>
<dbReference type="InterPro" id="IPR050478">
    <property type="entry name" value="Ethylene_sulfur-biosynth"/>
</dbReference>
<dbReference type="InterPro" id="IPR004838">
    <property type="entry name" value="NHTrfase_class1_PyrdxlP-BS"/>
</dbReference>
<dbReference type="InterPro" id="IPR015424">
    <property type="entry name" value="PyrdxlP-dep_Trfase"/>
</dbReference>
<dbReference type="InterPro" id="IPR015421">
    <property type="entry name" value="PyrdxlP-dep_Trfase_major"/>
</dbReference>
<dbReference type="InterPro" id="IPR015422">
    <property type="entry name" value="PyrdxlP-dep_Trfase_small"/>
</dbReference>
<dbReference type="PANTHER" id="PTHR43795:SF39">
    <property type="entry name" value="AMINOTRANSFERASE CLASS I_CLASSII DOMAIN-CONTAINING PROTEIN"/>
    <property type="match status" value="1"/>
</dbReference>
<dbReference type="PANTHER" id="PTHR43795">
    <property type="entry name" value="BIFUNCTIONAL ASPARTATE AMINOTRANSFERASE AND GLUTAMATE/ASPARTATE-PREPHENATE AMINOTRANSFERASE-RELATED"/>
    <property type="match status" value="1"/>
</dbReference>
<dbReference type="Pfam" id="PF00155">
    <property type="entry name" value="Aminotran_1_2"/>
    <property type="match status" value="1"/>
</dbReference>
<dbReference type="PRINTS" id="PR00753">
    <property type="entry name" value="ACCSYNTHASE"/>
</dbReference>
<dbReference type="SUPFAM" id="SSF53383">
    <property type="entry name" value="PLP-dependent transferases"/>
    <property type="match status" value="1"/>
</dbReference>
<dbReference type="PROSITE" id="PS00105">
    <property type="entry name" value="AA_TRANSFER_CLASS_1"/>
    <property type="match status" value="1"/>
</dbReference>
<comment type="function">
    <text evidence="1">Catalyzes the formation of 1-aminocyclopropane-1-carboxylate, a direct precursor of ethylene in higher plants.</text>
</comment>
<comment type="catalytic activity">
    <reaction evidence="1">
        <text>S-adenosyl-L-methionine = 1-aminocyclopropane-1-carboxylate + S-methyl-5'-thioadenosine + H(+)</text>
        <dbReference type="Rhea" id="RHEA:21744"/>
        <dbReference type="ChEBI" id="CHEBI:15378"/>
        <dbReference type="ChEBI" id="CHEBI:17509"/>
        <dbReference type="ChEBI" id="CHEBI:58360"/>
        <dbReference type="ChEBI" id="CHEBI:59789"/>
        <dbReference type="EC" id="4.4.1.14"/>
    </reaction>
</comment>
<comment type="cofactor">
    <cofactor evidence="1">
        <name>pyridoxal 5'-phosphate</name>
        <dbReference type="ChEBI" id="CHEBI:597326"/>
    </cofactor>
</comment>
<comment type="pathway">
    <text evidence="5">Alkene biosynthesis; ethylene biosynthesis via S-adenosyl-L-methionine; ethylene from S-adenosyl-L-methionine: step 1/2.</text>
</comment>
<comment type="tissue specificity">
    <text evidence="2 3">Expressed in leaves (PubMed:17012402). Expressed in shoots and leaf blades (PubMed:30810167). Expressed at low levels in leaf sheaths (PubMed:30810167).</text>
</comment>
<comment type="similarity">
    <text evidence="5">Belongs to the class-I pyridoxal-phosphate-dependent aminotransferase family.</text>
</comment>
<keyword id="KW-0266">Ethylene biosynthesis</keyword>
<keyword id="KW-0456">Lyase</keyword>
<keyword id="KW-0663">Pyridoxal phosphate</keyword>
<keyword id="KW-1185">Reference proteome</keyword>
<keyword id="KW-0949">S-adenosyl-L-methionine</keyword>
<evidence type="ECO:0000250" key="1">
    <source>
        <dbReference type="UniProtKB" id="P37821"/>
    </source>
</evidence>
<evidence type="ECO:0000269" key="2">
    <source>
    </source>
</evidence>
<evidence type="ECO:0000269" key="3">
    <source>
    </source>
</evidence>
<evidence type="ECO:0000303" key="4">
    <source>
    </source>
</evidence>
<evidence type="ECO:0000305" key="5"/>
<evidence type="ECO:0000312" key="6">
    <source>
        <dbReference type="EMBL" id="AAV44081.1"/>
    </source>
</evidence>
<evidence type="ECO:0000312" key="7">
    <source>
        <dbReference type="EMBL" id="AAV44121.1"/>
    </source>
</evidence>
<evidence type="ECO:0000312" key="8">
    <source>
        <dbReference type="EMBL" id="BAS93346.1"/>
    </source>
</evidence>
<gene>
    <name evidence="4" type="primary">ACS4</name>
    <name evidence="5" type="synonym">ACC4</name>
    <name evidence="8" type="ordered locus">Os05g0319200</name>
    <name evidence="5" type="ordered locus">LOC_Os05g25490</name>
    <name evidence="6" type="ORF">OSJNBb0006B22.3</name>
    <name evidence="7" type="ORF">OSJNBb0059K16.10</name>
</gene>